<sequence>MKVLHVCSELYPLLKTGGLADVLGALPAAQKEIGLDARILIPAYPAISAGIPDTGVVAEFHNSAAGHVVLRYGEFNGVGVYLIDAPNLYAREGNPYHDQWYNDYADNYKRFALLGWVGAELATGLDPWWMAEVVHAHDWHAGLTSAYLAYKGRPAKSVFTIHNLAYQGLFAYHHLFEIGLPTSMFNVNGLEFYGQISYLKAGLYYSDAVTAVSPTYAREITTPEFAYGFEGLLSTLHSQGKLVGILNGVDDNIWNPNTDGYIQDHYKLKSMTGKKKNKAALQAHFNLPEKPDALLFVMITRLTEQKGVDLLIQSAENIIKQGGQLALLGSGAPSLESALLGLAHKHPKNIAVKIGYDEPLSHLMVAGGDVILVPSRFEPCGLTQLYGLKYGTLPLVRQTGGLADTVVDSTAENIKERRATGFVFNEANSQALSHAISRAFSLWKKQRTWFTVRTVAMEQDFSWQISARRYEELYRRI</sequence>
<name>GLGA_MANSM</name>
<accession>Q65TI3</accession>
<protein>
    <recommendedName>
        <fullName evidence="1">Glycogen synthase</fullName>
        <ecNumber evidence="1">2.4.1.21</ecNumber>
    </recommendedName>
    <alternativeName>
        <fullName evidence="1">Starch [bacterial glycogen] synthase</fullName>
    </alternativeName>
</protein>
<reference key="1">
    <citation type="journal article" date="2004" name="Nat. Biotechnol.">
        <title>The genome sequence of the capnophilic rumen bacterium Mannheimia succiniciproducens.</title>
        <authorList>
            <person name="Hong S.H."/>
            <person name="Kim J.S."/>
            <person name="Lee S.Y."/>
            <person name="In Y.H."/>
            <person name="Choi S.S."/>
            <person name="Rih J.-K."/>
            <person name="Kim C.H."/>
            <person name="Jeong H."/>
            <person name="Hur C.G."/>
            <person name="Kim J.J."/>
        </authorList>
    </citation>
    <scope>NUCLEOTIDE SEQUENCE [LARGE SCALE GENOMIC DNA]</scope>
    <source>
        <strain>KCTC 0769BP / MBEL55E</strain>
    </source>
</reference>
<proteinExistence type="inferred from homology"/>
<organism>
    <name type="scientific">Mannheimia succiniciproducens (strain KCTC 0769BP / MBEL55E)</name>
    <dbReference type="NCBI Taxonomy" id="221988"/>
    <lineage>
        <taxon>Bacteria</taxon>
        <taxon>Pseudomonadati</taxon>
        <taxon>Pseudomonadota</taxon>
        <taxon>Gammaproteobacteria</taxon>
        <taxon>Pasteurellales</taxon>
        <taxon>Pasteurellaceae</taxon>
        <taxon>Basfia</taxon>
    </lineage>
</organism>
<gene>
    <name evidence="1" type="primary">glgA</name>
    <name type="ordered locus">MS1120</name>
</gene>
<comment type="function">
    <text evidence="1">Synthesizes alpha-1,4-glucan chains using ADP-glucose.</text>
</comment>
<comment type="catalytic activity">
    <reaction evidence="1">
        <text>[(1-&gt;4)-alpha-D-glucosyl](n) + ADP-alpha-D-glucose = [(1-&gt;4)-alpha-D-glucosyl](n+1) + ADP + H(+)</text>
        <dbReference type="Rhea" id="RHEA:18189"/>
        <dbReference type="Rhea" id="RHEA-COMP:9584"/>
        <dbReference type="Rhea" id="RHEA-COMP:9587"/>
        <dbReference type="ChEBI" id="CHEBI:15378"/>
        <dbReference type="ChEBI" id="CHEBI:15444"/>
        <dbReference type="ChEBI" id="CHEBI:57498"/>
        <dbReference type="ChEBI" id="CHEBI:456216"/>
        <dbReference type="EC" id="2.4.1.21"/>
    </reaction>
</comment>
<comment type="pathway">
    <text evidence="1">Glycan biosynthesis; glycogen biosynthesis.</text>
</comment>
<comment type="similarity">
    <text evidence="1">Belongs to the glycosyltransferase 1 family. Bacterial/plant glycogen synthase subfamily.</text>
</comment>
<feature type="chain" id="PRO_0000188623" description="Glycogen synthase">
    <location>
        <begin position="1"/>
        <end position="477"/>
    </location>
</feature>
<feature type="binding site" evidence="1">
    <location>
        <position position="15"/>
    </location>
    <ligand>
        <name>ADP-alpha-D-glucose</name>
        <dbReference type="ChEBI" id="CHEBI:57498"/>
    </ligand>
</feature>
<keyword id="KW-0320">Glycogen biosynthesis</keyword>
<keyword id="KW-0328">Glycosyltransferase</keyword>
<keyword id="KW-0808">Transferase</keyword>
<evidence type="ECO:0000255" key="1">
    <source>
        <dbReference type="HAMAP-Rule" id="MF_00484"/>
    </source>
</evidence>
<dbReference type="EC" id="2.4.1.21" evidence="1"/>
<dbReference type="EMBL" id="AE016827">
    <property type="protein sequence ID" value="AAU37727.1"/>
    <property type="molecule type" value="Genomic_DNA"/>
</dbReference>
<dbReference type="RefSeq" id="WP_011200295.1">
    <property type="nucleotide sequence ID" value="NC_006300.1"/>
</dbReference>
<dbReference type="SMR" id="Q65TI3"/>
<dbReference type="STRING" id="221988.MS1120"/>
<dbReference type="CAZy" id="GT5">
    <property type="family name" value="Glycosyltransferase Family 5"/>
</dbReference>
<dbReference type="KEGG" id="msu:MS1120"/>
<dbReference type="eggNOG" id="COG0297">
    <property type="taxonomic scope" value="Bacteria"/>
</dbReference>
<dbReference type="HOGENOM" id="CLU_009583_18_4_6"/>
<dbReference type="OrthoDB" id="9808590at2"/>
<dbReference type="UniPathway" id="UPA00164"/>
<dbReference type="Proteomes" id="UP000000607">
    <property type="component" value="Chromosome"/>
</dbReference>
<dbReference type="GO" id="GO:0005829">
    <property type="term" value="C:cytosol"/>
    <property type="evidence" value="ECO:0007669"/>
    <property type="project" value="TreeGrafter"/>
</dbReference>
<dbReference type="GO" id="GO:0009011">
    <property type="term" value="F:alpha-1,4-glucan glucosyltransferase (ADP-glucose donor) activity"/>
    <property type="evidence" value="ECO:0007669"/>
    <property type="project" value="UniProtKB-UniRule"/>
</dbReference>
<dbReference type="GO" id="GO:0004373">
    <property type="term" value="F:alpha-1,4-glucan glucosyltransferase (UDP-glucose donor) activity"/>
    <property type="evidence" value="ECO:0007669"/>
    <property type="project" value="InterPro"/>
</dbReference>
<dbReference type="GO" id="GO:0005978">
    <property type="term" value="P:glycogen biosynthetic process"/>
    <property type="evidence" value="ECO:0007669"/>
    <property type="project" value="UniProtKB-UniRule"/>
</dbReference>
<dbReference type="CDD" id="cd03791">
    <property type="entry name" value="GT5_Glycogen_synthase_DULL1-like"/>
    <property type="match status" value="1"/>
</dbReference>
<dbReference type="FunFam" id="3.40.50.2000:FF:000011">
    <property type="entry name" value="Glycogen synthase"/>
    <property type="match status" value="1"/>
</dbReference>
<dbReference type="Gene3D" id="3.40.50.2000">
    <property type="entry name" value="Glycogen Phosphorylase B"/>
    <property type="match status" value="2"/>
</dbReference>
<dbReference type="HAMAP" id="MF_00484">
    <property type="entry name" value="Glycogen_synth"/>
    <property type="match status" value="1"/>
</dbReference>
<dbReference type="InterPro" id="IPR001296">
    <property type="entry name" value="Glyco_trans_1"/>
</dbReference>
<dbReference type="InterPro" id="IPR011835">
    <property type="entry name" value="GS/SS"/>
</dbReference>
<dbReference type="InterPro" id="IPR013534">
    <property type="entry name" value="Starch_synth_cat_dom"/>
</dbReference>
<dbReference type="NCBIfam" id="TIGR02095">
    <property type="entry name" value="glgA"/>
    <property type="match status" value="1"/>
</dbReference>
<dbReference type="NCBIfam" id="NF001899">
    <property type="entry name" value="PRK00654.1-2"/>
    <property type="match status" value="1"/>
</dbReference>
<dbReference type="PANTHER" id="PTHR45825:SF11">
    <property type="entry name" value="ALPHA AMYLASE DOMAIN-CONTAINING PROTEIN"/>
    <property type="match status" value="1"/>
</dbReference>
<dbReference type="PANTHER" id="PTHR45825">
    <property type="entry name" value="GRANULE-BOUND STARCH SYNTHASE 1, CHLOROPLASTIC/AMYLOPLASTIC"/>
    <property type="match status" value="1"/>
</dbReference>
<dbReference type="Pfam" id="PF08323">
    <property type="entry name" value="Glyco_transf_5"/>
    <property type="match status" value="1"/>
</dbReference>
<dbReference type="Pfam" id="PF00534">
    <property type="entry name" value="Glycos_transf_1"/>
    <property type="match status" value="1"/>
</dbReference>
<dbReference type="SUPFAM" id="SSF53756">
    <property type="entry name" value="UDP-Glycosyltransferase/glycogen phosphorylase"/>
    <property type="match status" value="1"/>
</dbReference>